<comment type="function">
    <text evidence="1">This protein is located at the 30S-50S ribosomal subunit interface and may play a role in the structure and function of the aminoacyl-tRNA binding site.</text>
</comment>
<comment type="similarity">
    <text evidence="1">Belongs to the bacterial ribosomal protein bL19 family.</text>
</comment>
<dbReference type="EMBL" id="CP000503">
    <property type="protein sequence ID" value="ABM25810.1"/>
    <property type="molecule type" value="Genomic_DNA"/>
</dbReference>
<dbReference type="RefSeq" id="WP_006080791.1">
    <property type="nucleotide sequence ID" value="NC_008750.1"/>
</dbReference>
<dbReference type="SMR" id="A1RMB5"/>
<dbReference type="GeneID" id="94728937"/>
<dbReference type="KEGG" id="shw:Sputw3181_2993"/>
<dbReference type="HOGENOM" id="CLU_103507_2_2_6"/>
<dbReference type="Proteomes" id="UP000002597">
    <property type="component" value="Chromosome"/>
</dbReference>
<dbReference type="GO" id="GO:0022625">
    <property type="term" value="C:cytosolic large ribosomal subunit"/>
    <property type="evidence" value="ECO:0007669"/>
    <property type="project" value="TreeGrafter"/>
</dbReference>
<dbReference type="GO" id="GO:0003735">
    <property type="term" value="F:structural constituent of ribosome"/>
    <property type="evidence" value="ECO:0007669"/>
    <property type="project" value="InterPro"/>
</dbReference>
<dbReference type="GO" id="GO:0006412">
    <property type="term" value="P:translation"/>
    <property type="evidence" value="ECO:0007669"/>
    <property type="project" value="UniProtKB-UniRule"/>
</dbReference>
<dbReference type="FunFam" id="2.30.30.790:FF:000001">
    <property type="entry name" value="50S ribosomal protein L19"/>
    <property type="match status" value="1"/>
</dbReference>
<dbReference type="Gene3D" id="2.30.30.790">
    <property type="match status" value="1"/>
</dbReference>
<dbReference type="HAMAP" id="MF_00402">
    <property type="entry name" value="Ribosomal_bL19"/>
    <property type="match status" value="1"/>
</dbReference>
<dbReference type="InterPro" id="IPR001857">
    <property type="entry name" value="Ribosomal_bL19"/>
</dbReference>
<dbReference type="InterPro" id="IPR018257">
    <property type="entry name" value="Ribosomal_bL19_CS"/>
</dbReference>
<dbReference type="InterPro" id="IPR038657">
    <property type="entry name" value="Ribosomal_bL19_sf"/>
</dbReference>
<dbReference type="InterPro" id="IPR008991">
    <property type="entry name" value="Translation_prot_SH3-like_sf"/>
</dbReference>
<dbReference type="NCBIfam" id="TIGR01024">
    <property type="entry name" value="rplS_bact"/>
    <property type="match status" value="1"/>
</dbReference>
<dbReference type="PANTHER" id="PTHR15680:SF9">
    <property type="entry name" value="LARGE RIBOSOMAL SUBUNIT PROTEIN BL19M"/>
    <property type="match status" value="1"/>
</dbReference>
<dbReference type="PANTHER" id="PTHR15680">
    <property type="entry name" value="RIBOSOMAL PROTEIN L19"/>
    <property type="match status" value="1"/>
</dbReference>
<dbReference type="Pfam" id="PF01245">
    <property type="entry name" value="Ribosomal_L19"/>
    <property type="match status" value="1"/>
</dbReference>
<dbReference type="PIRSF" id="PIRSF002191">
    <property type="entry name" value="Ribosomal_L19"/>
    <property type="match status" value="1"/>
</dbReference>
<dbReference type="PRINTS" id="PR00061">
    <property type="entry name" value="RIBOSOMALL19"/>
</dbReference>
<dbReference type="SUPFAM" id="SSF50104">
    <property type="entry name" value="Translation proteins SH3-like domain"/>
    <property type="match status" value="1"/>
</dbReference>
<dbReference type="PROSITE" id="PS01015">
    <property type="entry name" value="RIBOSOMAL_L19"/>
    <property type="match status" value="1"/>
</dbReference>
<gene>
    <name evidence="1" type="primary">rplS</name>
    <name type="ordered locus">Sputw3181_2993</name>
</gene>
<keyword id="KW-0687">Ribonucleoprotein</keyword>
<keyword id="KW-0689">Ribosomal protein</keyword>
<evidence type="ECO:0000255" key="1">
    <source>
        <dbReference type="HAMAP-Rule" id="MF_00402"/>
    </source>
</evidence>
<evidence type="ECO:0000305" key="2"/>
<sequence length="117" mass="13292">MNNIIKMLNDEQMKQDVPAFGAGDTVVVQVRVKEGDKERLQAFEGVVIAKRNRGLHSAFTVRKISNGEGVERAFQTHSPLIASIEVKRRGRVRRAKLYYLRDRSGKSARIREKLATK</sequence>
<feature type="chain" id="PRO_1000049747" description="Large ribosomal subunit protein bL19">
    <location>
        <begin position="1"/>
        <end position="117"/>
    </location>
</feature>
<organism>
    <name type="scientific">Shewanella sp. (strain W3-18-1)</name>
    <dbReference type="NCBI Taxonomy" id="351745"/>
    <lineage>
        <taxon>Bacteria</taxon>
        <taxon>Pseudomonadati</taxon>
        <taxon>Pseudomonadota</taxon>
        <taxon>Gammaproteobacteria</taxon>
        <taxon>Alteromonadales</taxon>
        <taxon>Shewanellaceae</taxon>
        <taxon>Shewanella</taxon>
    </lineage>
</organism>
<proteinExistence type="inferred from homology"/>
<protein>
    <recommendedName>
        <fullName evidence="1">Large ribosomal subunit protein bL19</fullName>
    </recommendedName>
    <alternativeName>
        <fullName evidence="2">50S ribosomal protein L19</fullName>
    </alternativeName>
</protein>
<reference key="1">
    <citation type="submission" date="2006-12" db="EMBL/GenBank/DDBJ databases">
        <title>Complete sequence of Shewanella sp. W3-18-1.</title>
        <authorList>
            <consortium name="US DOE Joint Genome Institute"/>
            <person name="Copeland A."/>
            <person name="Lucas S."/>
            <person name="Lapidus A."/>
            <person name="Barry K."/>
            <person name="Detter J.C."/>
            <person name="Glavina del Rio T."/>
            <person name="Hammon N."/>
            <person name="Israni S."/>
            <person name="Dalin E."/>
            <person name="Tice H."/>
            <person name="Pitluck S."/>
            <person name="Chain P."/>
            <person name="Malfatti S."/>
            <person name="Shin M."/>
            <person name="Vergez L."/>
            <person name="Schmutz J."/>
            <person name="Larimer F."/>
            <person name="Land M."/>
            <person name="Hauser L."/>
            <person name="Kyrpides N."/>
            <person name="Lykidis A."/>
            <person name="Tiedje J."/>
            <person name="Richardson P."/>
        </authorList>
    </citation>
    <scope>NUCLEOTIDE SEQUENCE [LARGE SCALE GENOMIC DNA]</scope>
    <source>
        <strain>W3-18-1</strain>
    </source>
</reference>
<name>RL19_SHESW</name>
<accession>A1RMB5</accession>